<feature type="chain" id="PRO_0000202491" description="Vacuolar fusion protein CCZ1">
    <location>
        <begin position="1"/>
        <end position="704"/>
    </location>
</feature>
<feature type="region of interest" description="Disordered" evidence="1">
    <location>
        <begin position="281"/>
        <end position="322"/>
    </location>
</feature>
<evidence type="ECO:0000256" key="1">
    <source>
        <dbReference type="SAM" id="MobiDB-lite"/>
    </source>
</evidence>
<evidence type="ECO:0000269" key="2">
    <source>
    </source>
</evidence>
<evidence type="ECO:0000269" key="3">
    <source>
    </source>
</evidence>
<evidence type="ECO:0000269" key="4">
    <source>
    </source>
</evidence>
<evidence type="ECO:0000269" key="5">
    <source>
    </source>
</evidence>
<evidence type="ECO:0000269" key="6">
    <source>
    </source>
</evidence>
<evidence type="ECO:0000269" key="7">
    <source>
    </source>
</evidence>
<evidence type="ECO:0000269" key="8">
    <source>
    </source>
</evidence>
<evidence type="ECO:0000269" key="9">
    <source>
    </source>
</evidence>
<evidence type="ECO:0000269" key="10">
    <source>
    </source>
</evidence>
<evidence type="ECO:0000269" key="11">
    <source>
    </source>
</evidence>
<evidence type="ECO:0000269" key="12">
    <source>
    </source>
</evidence>
<evidence type="ECO:0000269" key="13">
    <source>
    </source>
</evidence>
<evidence type="ECO:0000303" key="14">
    <source>
    </source>
</evidence>
<evidence type="ECO:0000305" key="15"/>
<gene>
    <name type="primary">CCZ1</name>
    <name type="synonym">AUT11</name>
    <name type="synonym">CVT16</name>
    <name type="ordered locus">YBR131W</name>
    <name type="ORF">YBR1006</name>
</gene>
<reference key="1">
    <citation type="journal article" date="1994" name="Yeast">
        <title>The sequence of 29.7 kb from the right arm of chromosome II reveals 13 complete open reading frames, of which ten correspond to new genes.</title>
        <authorList>
            <person name="Becam A.-M."/>
            <person name="Cullin C."/>
            <person name="Grzybowska E."/>
            <person name="Lacroute F."/>
            <person name="Nasr F."/>
            <person name="Ozier-Kalogeropoulos O."/>
            <person name="Palucha A."/>
            <person name="Slonimski P.P."/>
            <person name="Zagulski M."/>
            <person name="Herbert C.J."/>
        </authorList>
    </citation>
    <scope>NUCLEOTIDE SEQUENCE [GENOMIC DNA]</scope>
    <source>
        <strain>ATCC 204508 / S288c</strain>
    </source>
</reference>
<reference key="2">
    <citation type="journal article" date="1994" name="EMBO J.">
        <title>Complete DNA sequence of yeast chromosome II.</title>
        <authorList>
            <person name="Feldmann H."/>
            <person name="Aigle M."/>
            <person name="Aljinovic G."/>
            <person name="Andre B."/>
            <person name="Baclet M.C."/>
            <person name="Barthe C."/>
            <person name="Baur A."/>
            <person name="Becam A.-M."/>
            <person name="Biteau N."/>
            <person name="Boles E."/>
            <person name="Brandt T."/>
            <person name="Brendel M."/>
            <person name="Brueckner M."/>
            <person name="Bussereau F."/>
            <person name="Christiansen C."/>
            <person name="Contreras R."/>
            <person name="Crouzet M."/>
            <person name="Cziepluch C."/>
            <person name="Demolis N."/>
            <person name="Delaveau T."/>
            <person name="Doignon F."/>
            <person name="Domdey H."/>
            <person name="Duesterhus S."/>
            <person name="Dubois E."/>
            <person name="Dujon B."/>
            <person name="El Bakkoury M."/>
            <person name="Entian K.-D."/>
            <person name="Feuermann M."/>
            <person name="Fiers W."/>
            <person name="Fobo G.M."/>
            <person name="Fritz C."/>
            <person name="Gassenhuber J."/>
            <person name="Glansdorff N."/>
            <person name="Goffeau A."/>
            <person name="Grivell L.A."/>
            <person name="de Haan M."/>
            <person name="Hein C."/>
            <person name="Herbert C.J."/>
            <person name="Hollenberg C.P."/>
            <person name="Holmstroem K."/>
            <person name="Jacq C."/>
            <person name="Jacquet M."/>
            <person name="Jauniaux J.-C."/>
            <person name="Jonniaux J.-L."/>
            <person name="Kallesoee T."/>
            <person name="Kiesau P."/>
            <person name="Kirchrath L."/>
            <person name="Koetter P."/>
            <person name="Korol S."/>
            <person name="Liebl S."/>
            <person name="Logghe M."/>
            <person name="Lohan A.J.E."/>
            <person name="Louis E.J."/>
            <person name="Li Z.Y."/>
            <person name="Maat M.J."/>
            <person name="Mallet L."/>
            <person name="Mannhaupt G."/>
            <person name="Messenguy F."/>
            <person name="Miosga T."/>
            <person name="Molemans F."/>
            <person name="Mueller S."/>
            <person name="Nasr F."/>
            <person name="Obermaier B."/>
            <person name="Perea J."/>
            <person name="Pierard A."/>
            <person name="Piravandi E."/>
            <person name="Pohl F.M."/>
            <person name="Pohl T.M."/>
            <person name="Potier S."/>
            <person name="Proft M."/>
            <person name="Purnelle B."/>
            <person name="Ramezani Rad M."/>
            <person name="Rieger M."/>
            <person name="Rose M."/>
            <person name="Schaaff-Gerstenschlaeger I."/>
            <person name="Scherens B."/>
            <person name="Schwarzlose C."/>
            <person name="Skala J."/>
            <person name="Slonimski P.P."/>
            <person name="Smits P.H.M."/>
            <person name="Souciet J.-L."/>
            <person name="Steensma H.Y."/>
            <person name="Stucka R."/>
            <person name="Urrestarazu L.A."/>
            <person name="van der Aart Q.J.M."/>
            <person name="Van Dyck L."/>
            <person name="Vassarotti A."/>
            <person name="Vetter I."/>
            <person name="Vierendeels F."/>
            <person name="Vissers S."/>
            <person name="Wagner G."/>
            <person name="de Wergifosse P."/>
            <person name="Wolfe K.H."/>
            <person name="Zagulski M."/>
            <person name="Zimmermann F.K."/>
            <person name="Mewes H.-W."/>
            <person name="Kleine K."/>
        </authorList>
    </citation>
    <scope>NUCLEOTIDE SEQUENCE [LARGE SCALE GENOMIC DNA]</scope>
    <source>
        <strain>ATCC 204508 / S288c</strain>
    </source>
</reference>
<reference key="3">
    <citation type="journal article" date="2014" name="G3 (Bethesda)">
        <title>The reference genome sequence of Saccharomyces cerevisiae: Then and now.</title>
        <authorList>
            <person name="Engel S.R."/>
            <person name="Dietrich F.S."/>
            <person name="Fisk D.G."/>
            <person name="Binkley G."/>
            <person name="Balakrishnan R."/>
            <person name="Costanzo M.C."/>
            <person name="Dwight S.S."/>
            <person name="Hitz B.C."/>
            <person name="Karra K."/>
            <person name="Nash R.S."/>
            <person name="Weng S."/>
            <person name="Wong E.D."/>
            <person name="Lloyd P."/>
            <person name="Skrzypek M.S."/>
            <person name="Miyasato S.R."/>
            <person name="Simison M."/>
            <person name="Cherry J.M."/>
        </authorList>
    </citation>
    <scope>GENOME REANNOTATION</scope>
    <source>
        <strain>ATCC 204508 / S288c</strain>
    </source>
</reference>
<reference key="4">
    <citation type="journal article" date="2007" name="Genome Res.">
        <title>Approaching a complete repository of sequence-verified protein-encoding clones for Saccharomyces cerevisiae.</title>
        <authorList>
            <person name="Hu Y."/>
            <person name="Rolfs A."/>
            <person name="Bhullar B."/>
            <person name="Murthy T.V.S."/>
            <person name="Zhu C."/>
            <person name="Berger M.F."/>
            <person name="Camargo A.A."/>
            <person name="Kelley F."/>
            <person name="McCarron S."/>
            <person name="Jepson D."/>
            <person name="Richardson A."/>
            <person name="Raphael J."/>
            <person name="Moreira D."/>
            <person name="Taycher E."/>
            <person name="Zuo D."/>
            <person name="Mohr S."/>
            <person name="Kane M.F."/>
            <person name="Williamson J."/>
            <person name="Simpson A.J.G."/>
            <person name="Bulyk M.L."/>
            <person name="Harlow E."/>
            <person name="Marsischky G."/>
            <person name="Kolodner R.D."/>
            <person name="LaBaer J."/>
        </authorList>
    </citation>
    <scope>NUCLEOTIDE SEQUENCE [GENOMIC DNA]</scope>
    <source>
        <strain>ATCC 204508 / S288c</strain>
    </source>
</reference>
<reference key="5">
    <citation type="journal article" date="1999" name="Yeast">
        <title>Disruption of six novel yeast genes located on chromosome II reveals one gene essential for vegetative growth and two required for sporulation and conferring hypersensitivity to various chemicals.</title>
        <authorList>
            <person name="Kucharczyk R."/>
            <person name="Gromadka R."/>
            <person name="Migdalski A."/>
            <person name="Slonimski P.P."/>
            <person name="Rytka J."/>
        </authorList>
    </citation>
    <scope>FUNCTION</scope>
</reference>
<reference key="6">
    <citation type="journal article" date="2000" name="J. Cell Sci.">
        <title>The novel protein Ccz1p required for vacuolar assembly in Saccharomyces cerevisiae functions in the same transport pathway as Ypt7p.</title>
        <authorList>
            <person name="Kucharczyk R."/>
            <person name="Dupre S."/>
            <person name="Avaro S."/>
            <person name="Haguenauer-Tsapis R."/>
            <person name="Slonimski P.P."/>
            <person name="Rytka J."/>
        </authorList>
    </citation>
    <scope>FUNCTION</scope>
    <scope>SUBCELLULAR LOCATION</scope>
</reference>
<reference key="7">
    <citation type="journal article" date="2001" name="J. Cell Sci.">
        <title>The Ccz1 protein interacts with Ypt7 GTPase during fusion of multiple transport intermediates with the vacuole in S. cerevisiae.</title>
        <authorList>
            <person name="Kucharczyk R."/>
            <person name="Kierzek A.M."/>
            <person name="Slonimski P.P."/>
            <person name="Rytka J."/>
        </authorList>
    </citation>
    <scope>FUNCTION</scope>
    <scope>INTERACTION WITH YPT7</scope>
</reference>
<reference key="8">
    <citation type="journal article" date="2002" name="FEBS Lett.">
        <title>Ccz1p/Aut11p/Cvt16p is essential for autophagy and the cvt pathway.</title>
        <authorList>
            <person name="Meiling-Wesse K."/>
            <person name="Barth H."/>
            <person name="Thumm M."/>
        </authorList>
    </citation>
    <scope>FUNCTION</scope>
</reference>
<reference key="9">
    <citation type="journal article" date="2002" name="J. Biol. Chem.">
        <title>The Ccz1-Mon1 protein complex is required for the late step of multiple vacuole delivery pathways.</title>
        <authorList>
            <person name="Wang C.-W."/>
            <person name="Stromhaug P.E."/>
            <person name="Shima J."/>
            <person name="Klionsky D.J."/>
        </authorList>
    </citation>
    <scope>FUNCTION</scope>
    <scope>SUBCELLULAR LOCATION</scope>
    <scope>INTERACTION WITH MON1</scope>
</reference>
<reference key="10">
    <citation type="journal article" date="2003" name="J. Cell Biol.">
        <title>Yeast homotypic vacuole fusion requires the Ccz1-Mon1 complex during the tethering/docking stage.</title>
        <authorList>
            <person name="Wang C.-W."/>
            <person name="Stromhaug P.E."/>
            <person name="Kauffman E.J."/>
            <person name="Weisman L.S."/>
            <person name="Klionsky D.J."/>
        </authorList>
    </citation>
    <scope>FUNCTION OF THE CCZ1-MON1 COMPLEX</scope>
</reference>
<reference key="11">
    <citation type="journal article" date="2003" name="Nature">
        <title>Global analysis of protein localization in budding yeast.</title>
        <authorList>
            <person name="Huh W.-K."/>
            <person name="Falvo J.V."/>
            <person name="Gerke L.C."/>
            <person name="Carroll A.S."/>
            <person name="Howson R.W."/>
            <person name="Weissman J.S."/>
            <person name="O'Shea E.K."/>
        </authorList>
    </citation>
    <scope>SUBCELLULAR LOCATION [LARGE SCALE ANALYSIS]</scope>
</reference>
<reference key="12">
    <citation type="journal article" date="2003" name="Nature">
        <title>Global analysis of protein expression in yeast.</title>
        <authorList>
            <person name="Ghaemmaghami S."/>
            <person name="Huh W.-K."/>
            <person name="Bower K."/>
            <person name="Howson R.W."/>
            <person name="Belle A."/>
            <person name="Dephoure N."/>
            <person name="O'Shea E.K."/>
            <person name="Weissman J.S."/>
        </authorList>
    </citation>
    <scope>LEVEL OF PROTEIN EXPRESSION [LARGE SCALE ANALYSIS]</scope>
</reference>
<reference key="13">
    <citation type="journal article" date="2004" name="Biochem. Biophys. Res. Commun.">
        <title>The yeast genes, ARL1 and CCZ1, interact to control membrane traffic and ion homeostasis.</title>
        <authorList>
            <person name="Love S.L."/>
            <person name="Manlandro C.M.A."/>
            <person name="Testa C.J."/>
            <person name="Thomas A.E."/>
            <person name="Tryggestad K.-E."/>
            <person name="Rosenwald A.G."/>
        </authorList>
    </citation>
    <scope>FUNCTION</scope>
</reference>
<reference key="14">
    <citation type="journal article" date="2005" name="Biochem. Biophys. Res. Commun.">
        <title>Multiple functions of the vacuolar sorting protein Ccz1p in Saccharomyces cerevisiae.</title>
        <authorList>
            <person name="Hoffman-Sommer M."/>
            <person name="Migdalski A."/>
            <person name="Rytka J."/>
            <person name="Kucharczyk R."/>
        </authorList>
    </citation>
    <scope>FUNCTION</scope>
</reference>
<reference key="15">
    <citation type="journal article" date="2010" name="Curr. Biol.">
        <title>The Mon1-Ccz1 complex is the GEF of the late endosomal Rab7 homolog Ypt7.</title>
        <authorList>
            <person name="Nordmann M."/>
            <person name="Cabrera M."/>
            <person name="Perz A."/>
            <person name="Broecker C."/>
            <person name="Ostrowicz C."/>
            <person name="Engelbrecht-Vandre S."/>
            <person name="Ungermann C."/>
        </authorList>
    </citation>
    <scope>FUNCTION</scope>
</reference>
<reference key="16">
    <citation type="journal article" date="2020" name="Elife">
        <title>A conserved and regulated mechanism drives endosomal Rab transition.</title>
        <authorList>
            <person name="Langemeyer L."/>
            <person name="Borchers A.C."/>
            <person name="Herrmann E."/>
            <person name="Fuellbrunn N."/>
            <person name="Han Y."/>
            <person name="Perz A."/>
            <person name="Auffarth K."/>
            <person name="Kuemmel D."/>
            <person name="Ungermann C."/>
        </authorList>
    </citation>
    <scope>FUNCTION</scope>
    <scope>INTERACTION WITH YPT10</scope>
    <scope>SUBCELLULAR LOCATION</scope>
</reference>
<reference key="17">
    <citation type="journal article" date="2023" name="Proc. Natl. Acad. Sci. U.S.A.">
        <title>Regulatory sites in the Mon1-Ccz1 complex control Rab5 to Rab7 transition and endosome maturation.</title>
        <authorList>
            <person name="Borchers A.C."/>
            <person name="Janz M."/>
            <person name="Schaefer J.H."/>
            <person name="Moeller A."/>
            <person name="Kuemmel D."/>
            <person name="Paululat A."/>
            <person name="Ungermann C."/>
            <person name="Langemeyer L."/>
        </authorList>
    </citation>
    <scope>FUNCTION</scope>
    <scope>ACTIVITY REGULATION</scope>
</reference>
<organism>
    <name type="scientific">Saccharomyces cerevisiae (strain ATCC 204508 / S288c)</name>
    <name type="common">Baker's yeast</name>
    <dbReference type="NCBI Taxonomy" id="559292"/>
    <lineage>
        <taxon>Eukaryota</taxon>
        <taxon>Fungi</taxon>
        <taxon>Dikarya</taxon>
        <taxon>Ascomycota</taxon>
        <taxon>Saccharomycotina</taxon>
        <taxon>Saccharomycetes</taxon>
        <taxon>Saccharomycetales</taxon>
        <taxon>Saccharomycetaceae</taxon>
        <taxon>Saccharomyces</taxon>
    </lineage>
</organism>
<accession>P38273</accession>
<accession>D6VQC8</accession>
<dbReference type="EMBL" id="X75891">
    <property type="protein sequence ID" value="CAA53490.1"/>
    <property type="molecule type" value="Genomic_DNA"/>
</dbReference>
<dbReference type="EMBL" id="Z36000">
    <property type="protein sequence ID" value="CAA85088.1"/>
    <property type="molecule type" value="Genomic_DNA"/>
</dbReference>
<dbReference type="EMBL" id="AY693208">
    <property type="protein sequence ID" value="AAT93227.1"/>
    <property type="molecule type" value="Genomic_DNA"/>
</dbReference>
<dbReference type="EMBL" id="BK006936">
    <property type="protein sequence ID" value="DAA07248.1"/>
    <property type="molecule type" value="Genomic_DNA"/>
</dbReference>
<dbReference type="PIR" id="S46000">
    <property type="entry name" value="S46000"/>
</dbReference>
<dbReference type="RefSeq" id="NP_009689.3">
    <property type="nucleotide sequence ID" value="NM_001178479.3"/>
</dbReference>
<dbReference type="BioGRID" id="32832">
    <property type="interactions" value="449"/>
</dbReference>
<dbReference type="ComplexPortal" id="CPX-1674">
    <property type="entry name" value="MON1-CCZ1 guanyl-nucleotide exchange factor complex"/>
</dbReference>
<dbReference type="DIP" id="DIP-7853N"/>
<dbReference type="FunCoup" id="P38273">
    <property type="interactions" value="131"/>
</dbReference>
<dbReference type="IntAct" id="P38273">
    <property type="interactions" value="4"/>
</dbReference>
<dbReference type="MINT" id="P38273"/>
<dbReference type="STRING" id="4932.YBR131W"/>
<dbReference type="iPTMnet" id="P38273"/>
<dbReference type="PaxDb" id="4932-YBR131W"/>
<dbReference type="PeptideAtlas" id="P38273"/>
<dbReference type="EnsemblFungi" id="YBR131W_mRNA">
    <property type="protein sequence ID" value="YBR131W"/>
    <property type="gene ID" value="YBR131W"/>
</dbReference>
<dbReference type="GeneID" id="852428"/>
<dbReference type="KEGG" id="sce:YBR131W"/>
<dbReference type="AGR" id="SGD:S000000335"/>
<dbReference type="SGD" id="S000000335">
    <property type="gene designation" value="CCZ1"/>
</dbReference>
<dbReference type="VEuPathDB" id="FungiDB:YBR131W"/>
<dbReference type="eggNOG" id="ENOG502QSQV">
    <property type="taxonomic scope" value="Eukaryota"/>
</dbReference>
<dbReference type="HOGENOM" id="CLU_418686_0_0_1"/>
<dbReference type="InParanoid" id="P38273"/>
<dbReference type="OMA" id="YNCLFWY"/>
<dbReference type="OrthoDB" id="240546at2759"/>
<dbReference type="BioCyc" id="YEAST:G3O-29086-MONOMER"/>
<dbReference type="Reactome" id="R-SCE-8876198">
    <property type="pathway name" value="RAB GEFs exchange GTP for GDP on RABs"/>
</dbReference>
<dbReference type="BioGRID-ORCS" id="852428">
    <property type="hits" value="0 hits in 10 CRISPR screens"/>
</dbReference>
<dbReference type="PRO" id="PR:P38273"/>
<dbReference type="Proteomes" id="UP000002311">
    <property type="component" value="Chromosome II"/>
</dbReference>
<dbReference type="RNAct" id="P38273">
    <property type="molecule type" value="protein"/>
</dbReference>
<dbReference type="GO" id="GO:0005829">
    <property type="term" value="C:cytosol"/>
    <property type="evidence" value="ECO:0007005"/>
    <property type="project" value="SGD"/>
</dbReference>
<dbReference type="GO" id="GO:0005768">
    <property type="term" value="C:endosome"/>
    <property type="evidence" value="ECO:0000314"/>
    <property type="project" value="SGD"/>
</dbReference>
<dbReference type="GO" id="GO:0043231">
    <property type="term" value="C:intracellular membrane-bounded organelle"/>
    <property type="evidence" value="ECO:0000318"/>
    <property type="project" value="GO_Central"/>
</dbReference>
<dbReference type="GO" id="GO:0005770">
    <property type="term" value="C:late endosome"/>
    <property type="evidence" value="ECO:0000314"/>
    <property type="project" value="SGD"/>
</dbReference>
<dbReference type="GO" id="GO:0035658">
    <property type="term" value="C:Mon1-Ccz1 complex"/>
    <property type="evidence" value="ECO:0000314"/>
    <property type="project" value="SGD"/>
</dbReference>
<dbReference type="GO" id="GO:0032585">
    <property type="term" value="C:multivesicular body membrane"/>
    <property type="evidence" value="ECO:0007669"/>
    <property type="project" value="UniProtKB-SubCell"/>
</dbReference>
<dbReference type="GO" id="GO:0005774">
    <property type="term" value="C:vacuolar membrane"/>
    <property type="evidence" value="ECO:0007669"/>
    <property type="project" value="UniProtKB-SubCell"/>
</dbReference>
<dbReference type="GO" id="GO:0005085">
    <property type="term" value="F:guanyl-nucleotide exchange factor activity"/>
    <property type="evidence" value="ECO:0000314"/>
    <property type="project" value="FlyBase"/>
</dbReference>
<dbReference type="GO" id="GO:0032266">
    <property type="term" value="F:phosphatidylinositol-3-phosphate binding"/>
    <property type="evidence" value="ECO:0000314"/>
    <property type="project" value="SGD"/>
</dbReference>
<dbReference type="GO" id="GO:0010314">
    <property type="term" value="F:phosphatidylinositol-5-phosphate binding"/>
    <property type="evidence" value="ECO:0000314"/>
    <property type="project" value="SGD"/>
</dbReference>
<dbReference type="GO" id="GO:0001786">
    <property type="term" value="F:phosphatidylserine binding"/>
    <property type="evidence" value="ECO:0000314"/>
    <property type="project" value="SGD"/>
</dbReference>
<dbReference type="GO" id="GO:0097352">
    <property type="term" value="P:autophagosome maturation"/>
    <property type="evidence" value="ECO:0000314"/>
    <property type="project" value="SGD"/>
</dbReference>
<dbReference type="GO" id="GO:0006914">
    <property type="term" value="P:autophagy"/>
    <property type="evidence" value="ECO:0000314"/>
    <property type="project" value="SGD"/>
</dbReference>
<dbReference type="GO" id="GO:0032258">
    <property type="term" value="P:cytoplasm to vacuole targeting by the Cvt pathway"/>
    <property type="evidence" value="ECO:0000315"/>
    <property type="project" value="SGD"/>
</dbReference>
<dbReference type="GO" id="GO:0032511">
    <property type="term" value="P:late endosome to vacuole transport via multivesicular body sorting pathway"/>
    <property type="evidence" value="ECO:0000315"/>
    <property type="project" value="ComplexPortal"/>
</dbReference>
<dbReference type="GO" id="GO:0016236">
    <property type="term" value="P:macroautophagy"/>
    <property type="evidence" value="ECO:0000315"/>
    <property type="project" value="SGD"/>
</dbReference>
<dbReference type="GO" id="GO:0044395">
    <property type="term" value="P:protein targeting to vacuolar membrane"/>
    <property type="evidence" value="ECO:0000315"/>
    <property type="project" value="SGD"/>
</dbReference>
<dbReference type="GO" id="GO:0006623">
    <property type="term" value="P:protein targeting to vacuole"/>
    <property type="evidence" value="ECO:0000315"/>
    <property type="project" value="SGD"/>
</dbReference>
<dbReference type="GO" id="GO:0007034">
    <property type="term" value="P:vacuolar transport"/>
    <property type="evidence" value="ECO:0000315"/>
    <property type="project" value="SGD"/>
</dbReference>
<dbReference type="GO" id="GO:0048278">
    <property type="term" value="P:vesicle docking"/>
    <property type="evidence" value="ECO:0000315"/>
    <property type="project" value="SGD"/>
</dbReference>
<dbReference type="GO" id="GO:0016192">
    <property type="term" value="P:vesicle-mediated transport"/>
    <property type="evidence" value="ECO:0000318"/>
    <property type="project" value="GO_Central"/>
</dbReference>
<dbReference type="InterPro" id="IPR013176">
    <property type="entry name" value="Ccz1"/>
</dbReference>
<dbReference type="InterPro" id="IPR043987">
    <property type="entry name" value="CCZ1/INTU/HSP4_longin_1"/>
</dbReference>
<dbReference type="PANTHER" id="PTHR13056">
    <property type="entry name" value="VACUOLAR FUSION PROTEIN CCZ1 HOMOLOG-RELATED"/>
    <property type="match status" value="1"/>
</dbReference>
<dbReference type="PANTHER" id="PTHR13056:SF0">
    <property type="entry name" value="VACUOLAR FUSION PROTEIN CCZ1 HOMOLOG-RELATED"/>
    <property type="match status" value="1"/>
</dbReference>
<dbReference type="Pfam" id="PF19031">
    <property type="entry name" value="Intu_longin_1"/>
    <property type="match status" value="1"/>
</dbReference>
<dbReference type="PIRSF" id="PIRSF011668">
    <property type="entry name" value="DUF1712_fun"/>
    <property type="match status" value="1"/>
</dbReference>
<name>CCZ1_YEAST</name>
<comment type="function">
    <text evidence="2 3 4 5 6 8 9 10 11 12 13">In complex with MON1, is required for multiple vacuole delivery pathways including the cytoplasm to vacuole transport (Cvt), autophagy, pexophagy and endocytosis. The MON1-CCZ1 complex acts at the fusion of vesicles with the vacuole, through its regulation of the SNARE complex during the coordinated priming and docking stages of fusion, and particularly at the stage of tethering/docking (PubMed:10407278, PubMed:11069774, PubMed:11590240, PubMed:12208507, PubMed:12364329, PubMed:14662743, PubMed:15184059, PubMed:15721293, PubMed:32391792, PubMed:37463208). The MON1-CCZ1 complex is recruited to membranes enriched in charged lipids, particularly phosphatidylinositol 3-phosphate (PtdIns3P), by GTP-associated small GTPase RAB5 homologs (YPT10, YPT52, YPT53 and VPS21) (PubMed:32391792). The MON1-CCZ1 complex recruits GDP-associated small GTPase YPT7 to membranes and acts as a guanine nucleotide-exchange factor (GEF), promoting nucleotide exchange on YPT7 and triggering endosomal maturation by recruiting downstream effectors such as components of the HOPS tethering complex (PubMed:20797862, PubMed:32391792).</text>
</comment>
<comment type="activity regulation">
    <text evidence="13">The YPT7 guanine nucleotide-exchange factor (GEF) activity of the MON1-CCZ1 complex is autoinhibited by the N-terminal disordered region of MON1.</text>
</comment>
<comment type="subunit">
    <text evidence="4 6 12">Forms a complex with MON1 (PubMed:12364329). Interacts with YPT7 (PubMed:11590240). Interacts with YPT10 with a strong preference for the GTP-associated form; may interact with other small GTPase Rab5 homologs but at much lower levels (PubMed:32391792).</text>
</comment>
<comment type="interaction">
    <interactant intactId="EBI-21608">
        <id>P38273</id>
    </interactant>
    <interactant intactId="EBI-23945">
        <id>P53129</id>
        <label>MON1</label>
    </interactant>
    <organismsDiffer>false</organismsDiffer>
    <experiments>5</experiments>
</comment>
<comment type="subcellular location">
    <subcellularLocation>
        <location>Endosome</location>
        <location>Multivesicular body membrane</location>
        <topology>Peripheral membrane protein</topology>
    </subcellularLocation>
    <subcellularLocation>
        <location>Prevacuolar compartment membrane</location>
        <topology>Peripheral membrane protein</topology>
    </subcellularLocation>
    <subcellularLocation>
        <location>Vacuole membrane</location>
        <topology>Peripheral membrane protein</topology>
    </subcellularLocation>
    <subcellularLocation>
        <location evidence="12">Vesicle</location>
    </subcellularLocation>
    <text evidence="12">The association of the MON1-CCZ1 complex with the vacuole is regulated by the C-Vps/HOPS complex. Colocalizes with the small GTPase RAB5 homolog YPT10 to vesicular structures near the vacuole (PubMed:32391792).</text>
</comment>
<comment type="miscellaneous">
    <text evidence="7">Present with 2870 molecules/cell in log phase SD medium.</text>
</comment>
<comment type="similarity">
    <text evidence="15">Belongs to the CCZ1 family.</text>
</comment>
<protein>
    <recommendedName>
        <fullName>Vacuolar fusion protein CCZ1</fullName>
        <shortName evidence="14">Ccz1p</shortName>
    </recommendedName>
    <alternativeName>
        <fullName>Autophagy-related protein 11</fullName>
    </alternativeName>
    <alternativeName>
        <fullName>Calcium-caffeine-zinc sensitivity protein 1</fullName>
    </alternativeName>
    <alternativeName>
        <fullName>Cytoplasm to vacuole targeting protein 16</fullName>
    </alternativeName>
</protein>
<sequence>MRLHYITVFDPSRSTNENDTFKQLLLFHYFGTTDSIPSLNEKLSIIGVIQGIWSLTSSCVNKDGEDLEKIIELNNDIIFCIKVESRFFISLAISNISDDQSAIPLQYLSAYLWLSYRFFKLLNGSFSGFNKDFRKLTDLLNEFVIPFWNDIYLNLETVTNRSFTVMWPGFYKRANFQHSSYNPGEKNNVEESWDAIILQNILLDKKSYLGLKDILVYHLPKRTKAANRESMGTKTYGLVRNFTSDLNTLPDISNWLYHLHCTYGEISSHILTGNVHFKEELQVEEEQERSRDTNGRDEEESQEQQRREHQETTQNNTSELSLSERVIHNVTLPISFAYDAIHEVSTTTGVSGSLSMIMDYVPKPHWPFISSSNKSADKNNYSNSNDNANSNAPLMAQSEAVGGTIGNSRFGFLISPLNSDLLPSSYQALKLNLNFENSKDKEDFYNCLFWYFDDFLIVIVCDPDFNKICERDYLKDLSFQLCQSMECLNNEILNSQNCDNVESFAYVIRDNVTKEIDSSVPFGSPKFTSDESISTLQLAINGIDQFINDNSNSLSLANWNPITIMGGSNAISKKNTTEGFGNGVNDKTQKFKRKYLNFLNLMSAEKLWDLQVDVLQFLTSLQNSKRDPDYFQEERLLKLNNGVLCYIKENNSNLIIIIKNWFQNNGTSKAAKQRNRFSSDSSKGSSLFQSLGRDVTDWWESREI</sequence>
<proteinExistence type="evidence at protein level"/>
<keyword id="KW-0072">Autophagy</keyword>
<keyword id="KW-0967">Endosome</keyword>
<keyword id="KW-0472">Membrane</keyword>
<keyword id="KW-0653">Protein transport</keyword>
<keyword id="KW-1185">Reference proteome</keyword>
<keyword id="KW-0813">Transport</keyword>
<keyword id="KW-0926">Vacuole</keyword>